<reference key="1">
    <citation type="submission" date="2006-09" db="EMBL/GenBank/DDBJ databases">
        <title>NISC comparative sequencing initiative.</title>
        <authorList>
            <person name="Antonellis A."/>
            <person name="Ayele K."/>
            <person name="Benjamin B."/>
            <person name="Blakesley R.W."/>
            <person name="Boakye A."/>
            <person name="Bouffard G.G."/>
            <person name="Brinkley C."/>
            <person name="Brooks S."/>
            <person name="Chu G."/>
            <person name="Coleman H."/>
            <person name="Engle J."/>
            <person name="Gestole M."/>
            <person name="Greene A."/>
            <person name="Guan X."/>
            <person name="Gupta J."/>
            <person name="Haghighi P."/>
            <person name="Han J."/>
            <person name="Hansen N."/>
            <person name="Ho S.-L."/>
            <person name="Hu P."/>
            <person name="Hunter G."/>
            <person name="Hurle B."/>
            <person name="Idol J.R."/>
            <person name="Kwong P."/>
            <person name="Laric P."/>
            <person name="Larson S."/>
            <person name="Lee-Lin S.-Q."/>
            <person name="Legaspi R."/>
            <person name="Madden M."/>
            <person name="Maduro Q.L."/>
            <person name="Maduro V.B."/>
            <person name="Margulies E.H."/>
            <person name="Masiello C."/>
            <person name="Maskeri B."/>
            <person name="McDowell J."/>
            <person name="Mojidi H.A."/>
            <person name="Mullikin J.C."/>
            <person name="Oestreicher J.S."/>
            <person name="Park M."/>
            <person name="Portnoy M.E."/>
            <person name="Prasad A."/>
            <person name="Puri O."/>
            <person name="Reddix-Dugue N."/>
            <person name="Schandler K."/>
            <person name="Schueler M.G."/>
            <person name="Sison C."/>
            <person name="Stantripop S."/>
            <person name="Stephen E."/>
            <person name="Taye A."/>
            <person name="Thomas J.W."/>
            <person name="Thomas P.J."/>
            <person name="Tsipouri V."/>
            <person name="Ung L."/>
            <person name="Vogt J.L."/>
            <person name="Wetherby K.D."/>
            <person name="Young A."/>
            <person name="Green E.D."/>
        </authorList>
    </citation>
    <scope>NUCLEOTIDE SEQUENCE [LARGE SCALE GENOMIC DNA]</scope>
</reference>
<keyword id="KW-0007">Acetylation</keyword>
<keyword id="KW-0117">Actin capping</keyword>
<keyword id="KW-0009">Actin-binding</keyword>
<keyword id="KW-0597">Phosphoprotein</keyword>
<keyword id="KW-1185">Reference proteome</keyword>
<evidence type="ECO:0000250" key="1"/>
<evidence type="ECO:0000250" key="2">
    <source>
        <dbReference type="UniProtKB" id="P47755"/>
    </source>
</evidence>
<evidence type="ECO:0000305" key="3"/>
<accession>Q07DY0</accession>
<protein>
    <recommendedName>
        <fullName>F-actin-capping protein subunit alpha-2</fullName>
    </recommendedName>
    <alternativeName>
        <fullName>CapZ alpha-2</fullName>
    </alternativeName>
</protein>
<feature type="initiator methionine" description="Removed" evidence="2">
    <location>
        <position position="1"/>
    </location>
</feature>
<feature type="chain" id="PRO_0000260356" description="F-actin-capping protein subunit alpha-2">
    <location>
        <begin position="2"/>
        <end position="286"/>
    </location>
</feature>
<feature type="modified residue" description="N-acetylalanine" evidence="2">
    <location>
        <position position="2"/>
    </location>
</feature>
<feature type="modified residue" description="Phosphoserine" evidence="2">
    <location>
        <position position="9"/>
    </location>
</feature>
<sequence>MADLEEQLSDEEKVRIAAKFIIHAPPGEFNEVFNDVRLLLNNDNLLREGAAHAFAQYNLDQFTPVKIEGYEDQVLITEHGDLGNGKFLDPKNRICFKFDHLRKEATDPRPCEVENAVESWRTSVETALRAYVKEHYPNGVCTVYGKKIDGQQTIIACIESHQFQAKNFWNGRWRSEWKFTITPSTTQVVGILKIQVHYYEDGNVQLVSHKDIQDSLTVSNEVQTAKEFIKIVEAAENEYQTAISENYQTMSDTTFKALRRQLPVTRTKIDWNKILSYKIGKEMQNA</sequence>
<gene>
    <name type="primary">CAPZA2</name>
</gene>
<dbReference type="EMBL" id="DP000194">
    <property type="protein sequence ID" value="ABJ08862.1"/>
    <property type="molecule type" value="Genomic_DNA"/>
</dbReference>
<dbReference type="RefSeq" id="XP_030681309.1">
    <property type="nucleotide sequence ID" value="XM_030825449.1"/>
</dbReference>
<dbReference type="SMR" id="Q07DY0"/>
<dbReference type="FunCoup" id="Q07DY0">
    <property type="interactions" value="1908"/>
</dbReference>
<dbReference type="STRING" id="61853.ENSNLEP00000034666"/>
<dbReference type="GeneID" id="100607107"/>
<dbReference type="eggNOG" id="KOG0836">
    <property type="taxonomic scope" value="Eukaryota"/>
</dbReference>
<dbReference type="InParanoid" id="Q07DY0"/>
<dbReference type="OrthoDB" id="340550at2759"/>
<dbReference type="Proteomes" id="UP000001073">
    <property type="component" value="Unplaced"/>
</dbReference>
<dbReference type="GO" id="GO:0030863">
    <property type="term" value="C:cortical cytoskeleton"/>
    <property type="evidence" value="ECO:0007669"/>
    <property type="project" value="TreeGrafter"/>
</dbReference>
<dbReference type="GO" id="GO:0008290">
    <property type="term" value="C:F-actin capping protein complex"/>
    <property type="evidence" value="ECO:0007669"/>
    <property type="project" value="InterPro"/>
</dbReference>
<dbReference type="GO" id="GO:0051015">
    <property type="term" value="F:actin filament binding"/>
    <property type="evidence" value="ECO:0007669"/>
    <property type="project" value="TreeGrafter"/>
</dbReference>
<dbReference type="GO" id="GO:0030036">
    <property type="term" value="P:actin cytoskeleton organization"/>
    <property type="evidence" value="ECO:0007669"/>
    <property type="project" value="TreeGrafter"/>
</dbReference>
<dbReference type="GO" id="GO:0051016">
    <property type="term" value="P:barbed-end actin filament capping"/>
    <property type="evidence" value="ECO:0007669"/>
    <property type="project" value="InterPro"/>
</dbReference>
<dbReference type="FunFam" id="3.30.1140.60:FF:000001">
    <property type="entry name" value="F-actin-capping protein subunit alpha"/>
    <property type="match status" value="1"/>
</dbReference>
<dbReference type="FunFam" id="3.90.1150.210:FF:000002">
    <property type="entry name" value="F-actin-capping protein subunit alpha"/>
    <property type="match status" value="1"/>
</dbReference>
<dbReference type="Gene3D" id="3.30.1140.60">
    <property type="entry name" value="F-actin capping protein, alpha subunit"/>
    <property type="match status" value="1"/>
</dbReference>
<dbReference type="Gene3D" id="3.90.1150.210">
    <property type="entry name" value="F-actin capping protein, beta subunit"/>
    <property type="match status" value="1"/>
</dbReference>
<dbReference type="InterPro" id="IPR002189">
    <property type="entry name" value="CapZ_alpha"/>
</dbReference>
<dbReference type="InterPro" id="IPR037282">
    <property type="entry name" value="CapZ_alpha/beta"/>
</dbReference>
<dbReference type="InterPro" id="IPR042276">
    <property type="entry name" value="CapZ_alpha/beta_2"/>
</dbReference>
<dbReference type="InterPro" id="IPR042489">
    <property type="entry name" value="CapZ_alpha_1"/>
</dbReference>
<dbReference type="InterPro" id="IPR017865">
    <property type="entry name" value="F-actin_cap_asu_CS"/>
</dbReference>
<dbReference type="PANTHER" id="PTHR10653">
    <property type="entry name" value="F-ACTIN-CAPPING PROTEIN SUBUNIT ALPHA"/>
    <property type="match status" value="1"/>
</dbReference>
<dbReference type="PANTHER" id="PTHR10653:SF2">
    <property type="entry name" value="F-ACTIN-CAPPING PROTEIN SUBUNIT ALPHA-2"/>
    <property type="match status" value="1"/>
</dbReference>
<dbReference type="Pfam" id="PF01267">
    <property type="entry name" value="F-actin_cap_A"/>
    <property type="match status" value="1"/>
</dbReference>
<dbReference type="PRINTS" id="PR00191">
    <property type="entry name" value="FACTINCAPA"/>
</dbReference>
<dbReference type="SUPFAM" id="SSF90096">
    <property type="entry name" value="Subunits of heterodimeric actin filament capping protein Capz"/>
    <property type="match status" value="1"/>
</dbReference>
<dbReference type="PROSITE" id="PS00748">
    <property type="entry name" value="F_ACTIN_CAPPING_A_1"/>
    <property type="match status" value="1"/>
</dbReference>
<dbReference type="PROSITE" id="PS00749">
    <property type="entry name" value="F_ACTIN_CAPPING_A_2"/>
    <property type="match status" value="1"/>
</dbReference>
<proteinExistence type="inferred from homology"/>
<organism>
    <name type="scientific">Nomascus leucogenys</name>
    <name type="common">Northern white-cheeked gibbon</name>
    <name type="synonym">Hylobates leucogenys</name>
    <dbReference type="NCBI Taxonomy" id="61853"/>
    <lineage>
        <taxon>Eukaryota</taxon>
        <taxon>Metazoa</taxon>
        <taxon>Chordata</taxon>
        <taxon>Craniata</taxon>
        <taxon>Vertebrata</taxon>
        <taxon>Euteleostomi</taxon>
        <taxon>Mammalia</taxon>
        <taxon>Eutheria</taxon>
        <taxon>Euarchontoglires</taxon>
        <taxon>Primates</taxon>
        <taxon>Haplorrhini</taxon>
        <taxon>Catarrhini</taxon>
        <taxon>Hylobatidae</taxon>
        <taxon>Nomascus</taxon>
    </lineage>
</organism>
<comment type="function">
    <text evidence="1">F-actin-capping proteins bind in a Ca(2+)-independent manner to the fast growing ends of actin filaments (barbed end) thereby blocking the exchange of subunits at these ends. Unlike other capping proteins (such as gelsolin and severin), these proteins do not sever actin filaments (By similarity).</text>
</comment>
<comment type="subunit">
    <text evidence="1 2">Component of the F-actin capping complex, composed of a heterodimer of an alpha and a beta subunit. Component of the WASH complex, composed of F-actin-capping protein subunit alpha (CAPZA1, CAPZA2 or CAPZA3), F-actin-capping protein subunit beta (CAPZB), WASHC1, WASHC2, WASHC3, WASHC4 and WASHC5. Interacts with RCSD1/CAPZIP (By similarity). Directly interacts with CRACD; this interaction decreases binding to actin (By similarity).</text>
</comment>
<comment type="similarity">
    <text evidence="3">Belongs to the F-actin-capping protein alpha subunit family.</text>
</comment>
<name>CAZA2_NOMLE</name>